<dbReference type="EC" id="1.11.1.24" evidence="1"/>
<dbReference type="EMBL" id="U88577">
    <property type="protein sequence ID" value="AAB71727.1"/>
    <property type="molecule type" value="mRNA"/>
</dbReference>
<dbReference type="SMR" id="P91883"/>
<dbReference type="MoonProt" id="P91883"/>
<dbReference type="BRENDA" id="1.11.1.24">
    <property type="organism ID" value="2230"/>
</dbReference>
<dbReference type="SABIO-RK" id="P91883"/>
<dbReference type="GO" id="GO:0005829">
    <property type="term" value="C:cytosol"/>
    <property type="evidence" value="ECO:0007669"/>
    <property type="project" value="TreeGrafter"/>
</dbReference>
<dbReference type="GO" id="GO:0008379">
    <property type="term" value="F:thioredoxin peroxidase activity"/>
    <property type="evidence" value="ECO:0007669"/>
    <property type="project" value="TreeGrafter"/>
</dbReference>
<dbReference type="GO" id="GO:0045454">
    <property type="term" value="P:cell redox homeostasis"/>
    <property type="evidence" value="ECO:0007669"/>
    <property type="project" value="TreeGrafter"/>
</dbReference>
<dbReference type="GO" id="GO:0033554">
    <property type="term" value="P:cellular response to stress"/>
    <property type="evidence" value="ECO:0007669"/>
    <property type="project" value="TreeGrafter"/>
</dbReference>
<dbReference type="GO" id="GO:0042744">
    <property type="term" value="P:hydrogen peroxide catabolic process"/>
    <property type="evidence" value="ECO:0007669"/>
    <property type="project" value="TreeGrafter"/>
</dbReference>
<dbReference type="GO" id="GO:0006979">
    <property type="term" value="P:response to oxidative stress"/>
    <property type="evidence" value="ECO:0007669"/>
    <property type="project" value="TreeGrafter"/>
</dbReference>
<dbReference type="CDD" id="cd03015">
    <property type="entry name" value="PRX_Typ2cys"/>
    <property type="match status" value="1"/>
</dbReference>
<dbReference type="FunFam" id="3.40.30.10:FF:000003">
    <property type="entry name" value="Peroxiredoxin 1"/>
    <property type="match status" value="1"/>
</dbReference>
<dbReference type="Gene3D" id="3.40.30.10">
    <property type="entry name" value="Glutaredoxin"/>
    <property type="match status" value="1"/>
</dbReference>
<dbReference type="InterPro" id="IPR000866">
    <property type="entry name" value="AhpC/TSA"/>
</dbReference>
<dbReference type="InterPro" id="IPR050217">
    <property type="entry name" value="Peroxiredoxin"/>
</dbReference>
<dbReference type="InterPro" id="IPR024706">
    <property type="entry name" value="Peroxiredoxin_AhpC-typ"/>
</dbReference>
<dbReference type="InterPro" id="IPR019479">
    <property type="entry name" value="Peroxiredoxin_C"/>
</dbReference>
<dbReference type="InterPro" id="IPR036249">
    <property type="entry name" value="Thioredoxin-like_sf"/>
</dbReference>
<dbReference type="InterPro" id="IPR013766">
    <property type="entry name" value="Thioredoxin_domain"/>
</dbReference>
<dbReference type="PANTHER" id="PTHR10681:SF171">
    <property type="entry name" value="PEROXIREDOXIN 4"/>
    <property type="match status" value="1"/>
</dbReference>
<dbReference type="PANTHER" id="PTHR10681">
    <property type="entry name" value="THIOREDOXIN PEROXIDASE"/>
    <property type="match status" value="1"/>
</dbReference>
<dbReference type="Pfam" id="PF10417">
    <property type="entry name" value="1-cysPrx_C"/>
    <property type="match status" value="1"/>
</dbReference>
<dbReference type="Pfam" id="PF00578">
    <property type="entry name" value="AhpC-TSA"/>
    <property type="match status" value="1"/>
</dbReference>
<dbReference type="PIRSF" id="PIRSF000239">
    <property type="entry name" value="AHPC"/>
    <property type="match status" value="1"/>
</dbReference>
<dbReference type="SUPFAM" id="SSF52833">
    <property type="entry name" value="Thioredoxin-like"/>
    <property type="match status" value="1"/>
</dbReference>
<dbReference type="PROSITE" id="PS51352">
    <property type="entry name" value="THIOREDOXIN_2"/>
    <property type="match status" value="1"/>
</dbReference>
<name>TDX_FASHE</name>
<sequence>MLQPNMPAPNFSGQAVVGKEFETISLSDYKGKWVILAFYPLDFTFVCPTEIIAISDQMEQFAQRNCAVIFCSTDSVYSHLQWTKMDRKVGGIGQLNFPLLADKNMSVSRAFGVLDEEQGNTYRGNFLIDPKGVLRQITVNDDPVGRSVEEALRLLDAFIFHEEHGEVCPANWKPKSKTIVPTPDGSKAYFSSAN</sequence>
<evidence type="ECO:0000250" key="1">
    <source>
        <dbReference type="UniProtKB" id="Q06830"/>
    </source>
</evidence>
<evidence type="ECO:0000255" key="2">
    <source>
        <dbReference type="PROSITE-ProRule" id="PRU00691"/>
    </source>
</evidence>
<evidence type="ECO:0000305" key="3"/>
<organism>
    <name type="scientific">Fasciola hepatica</name>
    <name type="common">Liver fluke</name>
    <dbReference type="NCBI Taxonomy" id="6192"/>
    <lineage>
        <taxon>Eukaryota</taxon>
        <taxon>Metazoa</taxon>
        <taxon>Spiralia</taxon>
        <taxon>Lophotrochozoa</taxon>
        <taxon>Platyhelminthes</taxon>
        <taxon>Trematoda</taxon>
        <taxon>Digenea</taxon>
        <taxon>Plagiorchiida</taxon>
        <taxon>Echinostomata</taxon>
        <taxon>Echinostomatoidea</taxon>
        <taxon>Fasciolidae</taxon>
        <taxon>Fasciola</taxon>
    </lineage>
</organism>
<accession>P91883</accession>
<feature type="chain" id="PRO_0000135092" description="Thioredoxin peroxidase">
    <location>
        <begin position="1"/>
        <end position="194"/>
    </location>
</feature>
<feature type="domain" description="Thioredoxin" evidence="2">
    <location>
        <begin position="2"/>
        <end position="160"/>
    </location>
</feature>
<feature type="active site" description="Cysteine sulfenic acid (-SOH) intermediate" evidence="1">
    <location>
        <position position="47"/>
    </location>
</feature>
<feature type="disulfide bond" description="Interchain (with C-168); in linked form" evidence="1">
    <location>
        <position position="47"/>
    </location>
</feature>
<feature type="disulfide bond" description="Interchain (with C-47); in linked form" evidence="1">
    <location>
        <position position="168"/>
    </location>
</feature>
<keyword id="KW-0049">Antioxidant</keyword>
<keyword id="KW-1015">Disulfide bond</keyword>
<keyword id="KW-0560">Oxidoreductase</keyword>
<keyword id="KW-0575">Peroxidase</keyword>
<keyword id="KW-0676">Redox-active center</keyword>
<proteinExistence type="evidence at transcript level"/>
<protein>
    <recommendedName>
        <fullName>Thioredoxin peroxidase</fullName>
        <ecNumber evidence="1">1.11.1.24</ecNumber>
    </recommendedName>
    <alternativeName>
        <fullName>Peroxiredoxin</fullName>
    </alternativeName>
    <alternativeName>
        <fullName>Thiol-specific antioxidant protein</fullName>
    </alternativeName>
    <alternativeName>
        <fullName>Thioredoxin-dependent peroxide reductase</fullName>
    </alternativeName>
    <alternativeName>
        <fullName evidence="3">Thioredoxin-dependent peroxiredoxin</fullName>
    </alternativeName>
</protein>
<reference key="1">
    <citation type="journal article" date="1997" name="Parasitology">
        <title>Cloning of peroxiredoxin, a novel antioxidant enzyme, from the helminth parasite Fasciola hepatica.</title>
        <authorList>
            <person name="McGonigle S."/>
            <person name="Curley G.P."/>
            <person name="Dalton J.P."/>
        </authorList>
    </citation>
    <scope>NUCLEOTIDE SEQUENCE [MRNA]</scope>
</reference>
<comment type="function">
    <text>Antioxidant. Could be involved in protection against reactive oxygen species (ROS) generated by metabolic processes and/or protection of the parasite against ROS released by immune effector cells.</text>
</comment>
<comment type="function">
    <text evidence="1">Thiol-specific peroxidase that catalyzes the reduction of hydrogen peroxide and organic hydroperoxides to water and alcohols, respectively. Plays a role in cell protection against oxidative stress by detoxifying peroxides and as sensor of hydrogen peroxide-mediated signaling events.</text>
</comment>
<comment type="catalytic activity">
    <reaction evidence="1">
        <text>a hydroperoxide + [thioredoxin]-dithiol = an alcohol + [thioredoxin]-disulfide + H2O</text>
        <dbReference type="Rhea" id="RHEA:62620"/>
        <dbReference type="Rhea" id="RHEA-COMP:10698"/>
        <dbReference type="Rhea" id="RHEA-COMP:10700"/>
        <dbReference type="ChEBI" id="CHEBI:15377"/>
        <dbReference type="ChEBI" id="CHEBI:29950"/>
        <dbReference type="ChEBI" id="CHEBI:30879"/>
        <dbReference type="ChEBI" id="CHEBI:35924"/>
        <dbReference type="ChEBI" id="CHEBI:50058"/>
        <dbReference type="EC" id="1.11.1.24"/>
    </reaction>
</comment>
<comment type="subunit">
    <text evidence="1">Homodimer; disulfide-linked, upon oxidation.</text>
</comment>
<comment type="miscellaneous">
    <text evidence="1">The active site is a conserved redox-active cysteine residue, the peroxidatic cysteine (C(P)), which makes the nucleophilic attack on the peroxide substrate. The peroxide oxidizes the C(P)-SH to cysteine sulfenic acid (C(P)-SOH), which then reacts with another cysteine residue, the resolving cysteine (C(R)), to form a disulfide bridge. The disulfide is subsequently reduced by an appropriate electron donor to complete the catalytic cycle. In this typical 2-Cys peroxiredoxin, C(R) is provided by the other dimeric subunit to form an intersubunit disulfide. The disulfide is subsequently reduced by thioredoxin.</text>
</comment>
<comment type="similarity">
    <text evidence="3">Belongs to the peroxiredoxin family. AhpC/Prx1 subfamily.</text>
</comment>